<evidence type="ECO:0000255" key="1">
    <source>
        <dbReference type="HAMAP-Rule" id="MF_00120"/>
    </source>
</evidence>
<accession>B4U197</accession>
<organism>
    <name type="scientific">Streptococcus equi subsp. zooepidemicus (strain MGCS10565)</name>
    <dbReference type="NCBI Taxonomy" id="552526"/>
    <lineage>
        <taxon>Bacteria</taxon>
        <taxon>Bacillati</taxon>
        <taxon>Bacillota</taxon>
        <taxon>Bacilli</taxon>
        <taxon>Lactobacillales</taxon>
        <taxon>Streptococcaceae</taxon>
        <taxon>Streptococcus</taxon>
    </lineage>
</organism>
<proteinExistence type="inferred from homology"/>
<gene>
    <name evidence="1" type="primary">gatA</name>
    <name type="ordered locus">Sez_0390</name>
</gene>
<comment type="function">
    <text evidence="1">Allows the formation of correctly charged Gln-tRNA(Gln) through the transamidation of misacylated Glu-tRNA(Gln) in organisms which lack glutaminyl-tRNA synthetase. The reaction takes place in the presence of glutamine and ATP through an activated gamma-phospho-Glu-tRNA(Gln).</text>
</comment>
<comment type="catalytic activity">
    <reaction evidence="1">
        <text>L-glutamyl-tRNA(Gln) + L-glutamine + ATP + H2O = L-glutaminyl-tRNA(Gln) + L-glutamate + ADP + phosphate + H(+)</text>
        <dbReference type="Rhea" id="RHEA:17521"/>
        <dbReference type="Rhea" id="RHEA-COMP:9681"/>
        <dbReference type="Rhea" id="RHEA-COMP:9684"/>
        <dbReference type="ChEBI" id="CHEBI:15377"/>
        <dbReference type="ChEBI" id="CHEBI:15378"/>
        <dbReference type="ChEBI" id="CHEBI:29985"/>
        <dbReference type="ChEBI" id="CHEBI:30616"/>
        <dbReference type="ChEBI" id="CHEBI:43474"/>
        <dbReference type="ChEBI" id="CHEBI:58359"/>
        <dbReference type="ChEBI" id="CHEBI:78520"/>
        <dbReference type="ChEBI" id="CHEBI:78521"/>
        <dbReference type="ChEBI" id="CHEBI:456216"/>
        <dbReference type="EC" id="6.3.5.7"/>
    </reaction>
</comment>
<comment type="subunit">
    <text evidence="1">Heterotrimer of A, B and C subunits.</text>
</comment>
<comment type="similarity">
    <text evidence="1">Belongs to the amidase family. GatA subfamily.</text>
</comment>
<feature type="chain" id="PRO_1000095167" description="Glutamyl-tRNA(Gln) amidotransferase subunit A">
    <location>
        <begin position="1"/>
        <end position="488"/>
    </location>
</feature>
<feature type="active site" description="Charge relay system" evidence="1">
    <location>
        <position position="77"/>
    </location>
</feature>
<feature type="active site" description="Charge relay system" evidence="1">
    <location>
        <position position="152"/>
    </location>
</feature>
<feature type="active site" description="Acyl-ester intermediate" evidence="1">
    <location>
        <position position="176"/>
    </location>
</feature>
<sequence length="488" mass="52236">MSFNHHTIEELHELLVAKDISAVELTKATLEDIKAREEAVGSFITIAEEAALKQAAALDAKGIDPDNVMSGIPLAVKDNISTKGILTTAASKMLYNYEPIFDATAVANAYDKDMIIIGKTNMDEFAMGGSTETSYFKKTKNAWDRSRVPGGSSGGSATAVASGQVRLSLGSDTGGSIRQPAAFNGVVGLKPTYGAVSRYGLIAFGSSLDQIGPFAPTVRENAQLLTVIAGSDRKDSTSAPVQIADYTSKIGQDIKGMKIALPKEYLGEGIDPKIKETVLAAAKHFEKLGAIIEEVSLPHSKYGVAVYYIIASSEASSNLQRFDGIRYGFRAADAKSLEDIYVKTRSQGFGDEVKRRIMLGTFSLSSGYYDAYFKKAGQVRTLIIQDFEKVFADYDLILGPTAPTAAFELDTLNHDPVAMYLADLLTIPVNLAGLPAISIPAGFADGLPVGLQLIGPKYSEEVIYQAAAAFEATTDYHKQQPMIFGGDS</sequence>
<reference key="1">
    <citation type="journal article" date="2008" name="PLoS ONE">
        <title>Genome sequence of a lancefield group C Streptococcus zooepidemicus strain causing epidemic nephritis: new information about an old disease.</title>
        <authorList>
            <person name="Beres S.B."/>
            <person name="Sesso R."/>
            <person name="Pinto S.W.L."/>
            <person name="Hoe N.P."/>
            <person name="Porcella S.F."/>
            <person name="Deleo F.R."/>
            <person name="Musser J.M."/>
        </authorList>
    </citation>
    <scope>NUCLEOTIDE SEQUENCE [LARGE SCALE GENOMIC DNA]</scope>
    <source>
        <strain>MGCS10565</strain>
    </source>
</reference>
<dbReference type="EC" id="6.3.5.7" evidence="1"/>
<dbReference type="EMBL" id="CP001129">
    <property type="protein sequence ID" value="ACG61764.1"/>
    <property type="molecule type" value="Genomic_DNA"/>
</dbReference>
<dbReference type="RefSeq" id="WP_012515040.1">
    <property type="nucleotide sequence ID" value="NC_011134.1"/>
</dbReference>
<dbReference type="SMR" id="B4U197"/>
<dbReference type="KEGG" id="sez:Sez_0390"/>
<dbReference type="HOGENOM" id="CLU_009600_0_3_9"/>
<dbReference type="Proteomes" id="UP000001873">
    <property type="component" value="Chromosome"/>
</dbReference>
<dbReference type="GO" id="GO:0030956">
    <property type="term" value="C:glutamyl-tRNA(Gln) amidotransferase complex"/>
    <property type="evidence" value="ECO:0007669"/>
    <property type="project" value="InterPro"/>
</dbReference>
<dbReference type="GO" id="GO:0005524">
    <property type="term" value="F:ATP binding"/>
    <property type="evidence" value="ECO:0007669"/>
    <property type="project" value="UniProtKB-KW"/>
</dbReference>
<dbReference type="GO" id="GO:0050567">
    <property type="term" value="F:glutaminyl-tRNA synthase (glutamine-hydrolyzing) activity"/>
    <property type="evidence" value="ECO:0007669"/>
    <property type="project" value="UniProtKB-UniRule"/>
</dbReference>
<dbReference type="GO" id="GO:0006412">
    <property type="term" value="P:translation"/>
    <property type="evidence" value="ECO:0007669"/>
    <property type="project" value="UniProtKB-UniRule"/>
</dbReference>
<dbReference type="Gene3D" id="3.90.1300.10">
    <property type="entry name" value="Amidase signature (AS) domain"/>
    <property type="match status" value="1"/>
</dbReference>
<dbReference type="HAMAP" id="MF_00120">
    <property type="entry name" value="GatA"/>
    <property type="match status" value="1"/>
</dbReference>
<dbReference type="InterPro" id="IPR000120">
    <property type="entry name" value="Amidase"/>
</dbReference>
<dbReference type="InterPro" id="IPR020556">
    <property type="entry name" value="Amidase_CS"/>
</dbReference>
<dbReference type="InterPro" id="IPR023631">
    <property type="entry name" value="Amidase_dom"/>
</dbReference>
<dbReference type="InterPro" id="IPR036928">
    <property type="entry name" value="AS_sf"/>
</dbReference>
<dbReference type="InterPro" id="IPR004412">
    <property type="entry name" value="GatA"/>
</dbReference>
<dbReference type="NCBIfam" id="TIGR00132">
    <property type="entry name" value="gatA"/>
    <property type="match status" value="1"/>
</dbReference>
<dbReference type="PANTHER" id="PTHR11895:SF151">
    <property type="entry name" value="GLUTAMYL-TRNA(GLN) AMIDOTRANSFERASE SUBUNIT A"/>
    <property type="match status" value="1"/>
</dbReference>
<dbReference type="PANTHER" id="PTHR11895">
    <property type="entry name" value="TRANSAMIDASE"/>
    <property type="match status" value="1"/>
</dbReference>
<dbReference type="Pfam" id="PF01425">
    <property type="entry name" value="Amidase"/>
    <property type="match status" value="1"/>
</dbReference>
<dbReference type="SUPFAM" id="SSF75304">
    <property type="entry name" value="Amidase signature (AS) enzymes"/>
    <property type="match status" value="1"/>
</dbReference>
<dbReference type="PROSITE" id="PS00571">
    <property type="entry name" value="AMIDASES"/>
    <property type="match status" value="1"/>
</dbReference>
<keyword id="KW-0067">ATP-binding</keyword>
<keyword id="KW-0436">Ligase</keyword>
<keyword id="KW-0547">Nucleotide-binding</keyword>
<keyword id="KW-0648">Protein biosynthesis</keyword>
<protein>
    <recommendedName>
        <fullName evidence="1">Glutamyl-tRNA(Gln) amidotransferase subunit A</fullName>
        <shortName evidence="1">Glu-ADT subunit A</shortName>
        <ecNumber evidence="1">6.3.5.7</ecNumber>
    </recommendedName>
</protein>
<name>GATA_STREM</name>